<evidence type="ECO:0000250" key="1"/>
<evidence type="ECO:0000250" key="2">
    <source>
        <dbReference type="UniProtKB" id="P04853"/>
    </source>
</evidence>
<evidence type="ECO:0000250" key="3">
    <source>
        <dbReference type="UniProtKB" id="P25465"/>
    </source>
</evidence>
<evidence type="ECO:0000250" key="4">
    <source>
        <dbReference type="UniProtKB" id="Q91UL0"/>
    </source>
</evidence>
<evidence type="ECO:0000250" key="5">
    <source>
        <dbReference type="UniProtKB" id="Q9WAF5"/>
    </source>
</evidence>
<evidence type="ECO:0000255" key="6"/>
<evidence type="ECO:0000305" key="7"/>
<organism>
    <name type="scientific">Parainfluenza virus 5 (isolate Canine/CPI-)</name>
    <name type="common">PIV5</name>
    <name type="synonym">Simian virus 5</name>
    <dbReference type="NCBI Taxonomy" id="31609"/>
    <lineage>
        <taxon>Viruses</taxon>
        <taxon>Riboviria</taxon>
        <taxon>Orthornavirae</taxon>
        <taxon>Negarnaviricota</taxon>
        <taxon>Haploviricotina</taxon>
        <taxon>Monjiviricetes</taxon>
        <taxon>Mononegavirales</taxon>
        <taxon>Paramyxoviridae</taxon>
        <taxon>Rubulavirinae</taxon>
        <taxon>Orthorubulavirus</taxon>
        <taxon>Orthorubulavirus mammalis</taxon>
        <taxon>Mammalian orthorubulavirus 5</taxon>
    </lineage>
</organism>
<organismHost>
    <name type="scientific">Canis lupus familiaris</name>
    <name type="common">Dog</name>
    <name type="synonym">Canis familiaris</name>
    <dbReference type="NCBI Taxonomy" id="9615"/>
</organismHost>
<organismHost>
    <name type="scientific">Homo sapiens</name>
    <name type="common">Human</name>
    <dbReference type="NCBI Taxonomy" id="9606"/>
</organismHost>
<organismHost>
    <name type="scientific">Macaca fascicularis</name>
    <name type="common">Crab-eating macaque</name>
    <name type="synonym">Cynomolgus monkey</name>
    <dbReference type="NCBI Taxonomy" id="9541"/>
</organismHost>
<organismHost>
    <name type="scientific">Macaca mulatta</name>
    <name type="common">Rhesus macaque</name>
    <dbReference type="NCBI Taxonomy" id="9544"/>
</organismHost>
<name>HN_PIV5C</name>
<protein>
    <recommendedName>
        <fullName>Hemagglutinin-neuraminidase</fullName>
        <ecNumber evidence="3">3.2.1.18</ecNumber>
    </recommendedName>
</protein>
<keyword id="KW-1015">Disulfide bond</keyword>
<keyword id="KW-0325">Glycoprotein</keyword>
<keyword id="KW-0348">Hemagglutinin</keyword>
<keyword id="KW-1032">Host cell membrane</keyword>
<keyword id="KW-1043">Host membrane</keyword>
<keyword id="KW-0945">Host-virus interaction</keyword>
<keyword id="KW-0378">Hydrolase</keyword>
<keyword id="KW-0472">Membrane</keyword>
<keyword id="KW-0735">Signal-anchor</keyword>
<keyword id="KW-0812">Transmembrane</keyword>
<keyword id="KW-1133">Transmembrane helix</keyword>
<keyword id="KW-1161">Viral attachment to host cell</keyword>
<keyword id="KW-0261">Viral envelope protein</keyword>
<keyword id="KW-0946">Virion</keyword>
<keyword id="KW-1160">Virus entry into host cell</keyword>
<dbReference type="EC" id="3.2.1.18" evidence="3"/>
<dbReference type="PIR" id="JQ1305">
    <property type="entry name" value="HNNZC1"/>
</dbReference>
<dbReference type="SMR" id="P28883"/>
<dbReference type="CAZy" id="GH83">
    <property type="family name" value="Glycoside Hydrolase Family 83"/>
</dbReference>
<dbReference type="GlyCosmos" id="P28883">
    <property type="glycosylation" value="4 sites, No reported glycans"/>
</dbReference>
<dbReference type="GO" id="GO:0020002">
    <property type="term" value="C:host cell plasma membrane"/>
    <property type="evidence" value="ECO:0007669"/>
    <property type="project" value="UniProtKB-SubCell"/>
</dbReference>
<dbReference type="GO" id="GO:0016020">
    <property type="term" value="C:membrane"/>
    <property type="evidence" value="ECO:0007669"/>
    <property type="project" value="UniProtKB-KW"/>
</dbReference>
<dbReference type="GO" id="GO:0019031">
    <property type="term" value="C:viral envelope"/>
    <property type="evidence" value="ECO:0007669"/>
    <property type="project" value="UniProtKB-KW"/>
</dbReference>
<dbReference type="GO" id="GO:0055036">
    <property type="term" value="C:virion membrane"/>
    <property type="evidence" value="ECO:0007669"/>
    <property type="project" value="UniProtKB-SubCell"/>
</dbReference>
<dbReference type="GO" id="GO:0004308">
    <property type="term" value="F:exo-alpha-sialidase activity"/>
    <property type="evidence" value="ECO:0007669"/>
    <property type="project" value="UniProtKB-EC"/>
</dbReference>
<dbReference type="GO" id="GO:0046789">
    <property type="term" value="F:host cell surface receptor binding"/>
    <property type="evidence" value="ECO:0007669"/>
    <property type="project" value="InterPro"/>
</dbReference>
<dbReference type="GO" id="GO:0046718">
    <property type="term" value="P:symbiont entry into host cell"/>
    <property type="evidence" value="ECO:0007669"/>
    <property type="project" value="UniProtKB-KW"/>
</dbReference>
<dbReference type="GO" id="GO:0019062">
    <property type="term" value="P:virion attachment to host cell"/>
    <property type="evidence" value="ECO:0007669"/>
    <property type="project" value="UniProtKB-KW"/>
</dbReference>
<dbReference type="CDD" id="cd15469">
    <property type="entry name" value="HN"/>
    <property type="match status" value="1"/>
</dbReference>
<dbReference type="FunFam" id="2.120.10.10:FF:000004">
    <property type="entry name" value="Hemagglutinin-neuraminidase"/>
    <property type="match status" value="1"/>
</dbReference>
<dbReference type="Gene3D" id="1.20.5.110">
    <property type="match status" value="1"/>
</dbReference>
<dbReference type="Gene3D" id="2.120.10.10">
    <property type="match status" value="1"/>
</dbReference>
<dbReference type="InterPro" id="IPR016285">
    <property type="entry name" value="Hemagglutn-neuramid"/>
</dbReference>
<dbReference type="InterPro" id="IPR000665">
    <property type="entry name" value="Hemagglutn/HN"/>
</dbReference>
<dbReference type="InterPro" id="IPR036278">
    <property type="entry name" value="Sialidase_sf"/>
</dbReference>
<dbReference type="Pfam" id="PF00423">
    <property type="entry name" value="HN"/>
    <property type="match status" value="1"/>
</dbReference>
<dbReference type="PIRSF" id="PIRSF001072">
    <property type="entry name" value="Hemagglut-neuramid_paramyxoV"/>
    <property type="match status" value="1"/>
</dbReference>
<dbReference type="SUPFAM" id="SSF50939">
    <property type="entry name" value="Sialidases"/>
    <property type="match status" value="1"/>
</dbReference>
<comment type="function">
    <text evidence="1">Attaches the virus to sialic acid-containing cell receptors and thereby initiating infection. Binding of HN protein to the receptor induces a conformational change that allows the F protein to trigger virion/cell membranes fusion (By similarity).</text>
</comment>
<comment type="function">
    <text evidence="1">Neuraminidase activity ensures the efficient spread of the virus by dissociating the mature virions from the neuraminic acid containing glycoproteins.</text>
</comment>
<comment type="catalytic activity">
    <reaction evidence="3">
        <text>Hydrolysis of alpha-(2-&gt;3)-, alpha-(2-&gt;6)-, alpha-(2-&gt;8)- glycosidic linkages of terminal sialic acid residues in oligosaccharides, glycoproteins, glycolipids, colominic acid and synthetic substrates.</text>
        <dbReference type="EC" id="3.2.1.18"/>
    </reaction>
</comment>
<comment type="subunit">
    <text evidence="2 5">Homotetramer; composed of disulfide-linked homodimers (By similarity). Interacts with F protein trimer (By similarity).</text>
</comment>
<comment type="subcellular location">
    <subcellularLocation>
        <location evidence="7">Virion membrane</location>
        <topology evidence="7">Single-pass type II membrane protein</topology>
    </subcellularLocation>
    <subcellularLocation>
        <location evidence="7">Host cell membrane</location>
        <topology evidence="7">Single-pass type II membrane protein</topology>
    </subcellularLocation>
</comment>
<comment type="domain">
    <text evidence="5">The C-terminus (head domain) is involved in binding the cellular receptor.</text>
</comment>
<comment type="similarity">
    <text evidence="7">Belongs to the paramyxoviruses hemagglutinin-neuraminidase family.</text>
</comment>
<reference key="1">
    <citation type="journal article" date="1991" name="J. Gen. Virol.">
        <title>Sequence comparison between the haemagglutinin-neuraminidase genes of simian, canine and human isolates of simian virus 5.</title>
        <authorList>
            <person name="Baty D.U."/>
            <person name="Southern J.A."/>
            <person name="Randall R.E."/>
        </authorList>
    </citation>
    <scope>NUCLEOTIDE SEQUENCE</scope>
</reference>
<sequence>MVAEDAPVRGTCRVLFRTTTLIFLCTLLALSISILYESLIIQKQIMSQAGSTGSNFRLGSITDLLNNILSVANQIIYNSAVALPLQLDTLESTLLTAIKSLQTSDKLEQNCSWGAALINDNRYINGINQFYFSIAEGRNLTLGPLLNIPSFIPTATTPEGCTRIPSFSLTKTHWCYTHNVILNGCQDHVSSNQFVSMGIIEPTSAGFPSFRTLKTLYLSDGVNRKSCSISTVPGGCMMYCFVSTQPERDDYLSTAPPEQRIIIMYYNDTIVERIINPPGVLDVWATLNPGTGSGVYYLGWVLFPTYGGVIKDTSLWNNQANKYFIPQMVAALCSQNQATQVQNAKSSYYSSWFGNRMIQSGILACPLQQDLTNECLILPFSNDQVLMGAEGRLYMYGDSVYYYQRSNSWWPMTMLYKVTITFTNGQPSAISAQNVPTQQVPRPGTGDCSATNRCPGFCLKGVYADAWLLTNPSSTSTFGSEATFTGSYLNAATQRINPTMYIANNTQIISSQQFGSSGQEAAYGHTTCFRDTGSVMVYCIYIIELSSSLLGQFQIVPFIRQVTLS</sequence>
<accession>P28883</accession>
<feature type="chain" id="PRO_0000142642" description="Hemagglutinin-neuraminidase">
    <location>
        <begin position="1"/>
        <end position="565"/>
    </location>
</feature>
<feature type="topological domain" description="Intravirion" evidence="6">
    <location>
        <begin position="1"/>
        <end position="20"/>
    </location>
</feature>
<feature type="transmembrane region" description="Helical" evidence="6">
    <location>
        <begin position="21"/>
        <end position="41"/>
    </location>
</feature>
<feature type="topological domain" description="Virion surface" evidence="6">
    <location>
        <begin position="42"/>
        <end position="565"/>
    </location>
</feature>
<feature type="region of interest" description="Involved in neuraminidase activity" evidence="4">
    <location>
        <begin position="223"/>
        <end position="228"/>
    </location>
</feature>
<feature type="glycosylation site" description="N-linked (GlcNAc...) asparagine; by host" evidence="6">
    <location>
        <position position="110"/>
    </location>
</feature>
<feature type="glycosylation site" description="N-linked (GlcNAc...) asparagine; by host" evidence="6">
    <location>
        <position position="139"/>
    </location>
</feature>
<feature type="glycosylation site" description="N-linked (GlcNAc...) asparagine; by host" evidence="6">
    <location>
        <position position="267"/>
    </location>
</feature>
<feature type="glycosylation site" description="N-linked (GlcNAc...) asparagine; by host" evidence="6">
    <location>
        <position position="504"/>
    </location>
</feature>
<feature type="disulfide bond" evidence="5">
    <location>
        <begin position="161"/>
        <end position="185"/>
    </location>
</feature>
<feature type="disulfide bond" evidence="5">
    <location>
        <begin position="175"/>
        <end position="236"/>
    </location>
</feature>
<feature type="disulfide bond" evidence="5">
    <location>
        <begin position="227"/>
        <end position="240"/>
    </location>
</feature>
<feature type="disulfide bond" evidence="5">
    <location>
        <begin position="333"/>
        <end position="454"/>
    </location>
</feature>
<feature type="disulfide bond" evidence="5">
    <location>
        <begin position="365"/>
        <end position="375"/>
    </location>
</feature>
<feature type="disulfide bond" evidence="5">
    <location>
        <begin position="448"/>
        <end position="458"/>
    </location>
</feature>
<feature type="disulfide bond" evidence="5">
    <location>
        <begin position="528"/>
        <end position="539"/>
    </location>
</feature>
<gene>
    <name type="primary">HN</name>
</gene>
<proteinExistence type="inferred from homology"/>